<sequence>MNASPVRLLILRRQLATHPAILYSSPYIKSPLVHLHSRMSNVHRSAHANALSFVITRRSISHFPKIISKIIRLPIYVGGGMAAAGSYIAYKMEEASSFTKDKLDRIKDLGESMKEKFNKMFSGDKSQDGGHGNDGTVPTATLIAATSLDDDESKRQGDPKDDDDEDDDDEDDENDSVDTTQDEMLNLTKQMIEIRTILNKVDSSSAHLTLPSIVVIGSQSSGKSSVLESIVGREFLPKGSNMVTRRPIELTLVNTPNSNNVTADFPSMRLYNIKDFKEVKRMLMELNMAVPTSEAVSEEPIQLTIKSSRVPDLSLVDLPGYIQVEAADQPIELKTKIRDLCEKYLTAPNIILAISAADVDLANSSALKASKAADPKGLRTIGVITKLDLVDPEKARSILNNKKYPLSMGYVGVITKTPSSINRKHLGLFGEAPSSSLSGIFSKGQHGQSSGEENTNGLKQIVSHQFEKAYFKENKKYFTNCQVSTKKLREKLIKILEISMSNALEPTSTLIQQELDDTSYLFKVEFNDRHLTPKSYLLNNIDVLKLGIKEFQEKFHRNELKSILRAELDQKVLDVLATRYWKDDNLQDLSSSKLESDTDMLYWHKKLELASSGLTKMGIGRLSTMLTTNAILKELDNILESTQLKNHELIKDLVSNTAINVLNSKYYSTADQVENCIKPFKYEIDLEERDWSLARQHSINLIKEELRQCNSRYQAIKNAVGSKKLANVMGYLENESNLQKETLGMSKLLLERGSEAIFLDKRCKVLSFRLKMLKNKCHSTIEKDRCPEVFLSAVSDKLTSTAVLFLNVELLSDFFYNFPIELDRRLTLLGDEQVEMFAKEDPKISRHIELQKRKELLELALEKIDSILVFKKSYKGVSKNL</sequence>
<evidence type="ECO:0000250" key="1">
    <source>
        <dbReference type="UniProtKB" id="G0SGC7"/>
    </source>
</evidence>
<evidence type="ECO:0000250" key="2">
    <source>
        <dbReference type="UniProtKB" id="O60313"/>
    </source>
</evidence>
<evidence type="ECO:0000255" key="3"/>
<evidence type="ECO:0000255" key="4">
    <source>
        <dbReference type="PROSITE-ProRule" id="PRU00720"/>
    </source>
</evidence>
<evidence type="ECO:0000255" key="5">
    <source>
        <dbReference type="PROSITE-ProRule" id="PRU01055"/>
    </source>
</evidence>
<evidence type="ECO:0000256" key="6">
    <source>
        <dbReference type="SAM" id="MobiDB-lite"/>
    </source>
</evidence>
<evidence type="ECO:0000269" key="7">
    <source>
    </source>
</evidence>
<evidence type="ECO:0000269" key="8">
    <source>
    </source>
</evidence>
<evidence type="ECO:0000269" key="9">
    <source>
    </source>
</evidence>
<evidence type="ECO:0000269" key="10">
    <source>
    </source>
</evidence>
<evidence type="ECO:0000269" key="11">
    <source>
    </source>
</evidence>
<evidence type="ECO:0000269" key="12">
    <source>
    </source>
</evidence>
<evidence type="ECO:0000269" key="13">
    <source>
    </source>
</evidence>
<evidence type="ECO:0000269" key="14">
    <source>
    </source>
</evidence>
<evidence type="ECO:0000269" key="15">
    <source>
    </source>
</evidence>
<evidence type="ECO:0000269" key="16">
    <source>
    </source>
</evidence>
<evidence type="ECO:0000269" key="17">
    <source>
    </source>
</evidence>
<evidence type="ECO:0000269" key="18">
    <source>
    </source>
</evidence>
<evidence type="ECO:0000269" key="19">
    <source>
    </source>
</evidence>
<evidence type="ECO:0000269" key="20">
    <source>
    </source>
</evidence>
<evidence type="ECO:0000303" key="21">
    <source>
    </source>
</evidence>
<evidence type="ECO:0000305" key="22"/>
<evidence type="ECO:0000305" key="23">
    <source>
    </source>
</evidence>
<evidence type="ECO:0000305" key="24">
    <source>
    </source>
</evidence>
<evidence type="ECO:0000305" key="25">
    <source>
    </source>
</evidence>
<evidence type="ECO:0000312" key="26">
    <source>
        <dbReference type="SGD" id="S000005737"/>
    </source>
</evidence>
<evidence type="ECO:0007744" key="27">
    <source>
        <dbReference type="PDB" id="6JSJ"/>
    </source>
</evidence>
<evidence type="ECO:0007829" key="28">
    <source>
        <dbReference type="PDB" id="6JSJ"/>
    </source>
</evidence>
<protein>
    <recommendedName>
        <fullName>Dynamin-like GTPase MGM1, mitochondrial</fullName>
        <ecNumber evidence="16 17 19">3.6.5.5</ecNumber>
    </recommendedName>
    <alternativeName>
        <fullName>Mitochondrial division and morphology protein 17</fullName>
    </alternativeName>
    <alternativeName>
        <fullName evidence="21">Mitochondrial genome maintenance protein 1</fullName>
    </alternativeName>
    <component>
        <recommendedName>
            <fullName>Dynamin-like GTPase MGM1, long form</fullName>
            <shortName>l-MGM1</shortName>
        </recommendedName>
    </component>
    <component>
        <recommendedName>
            <fullName>Dynamin-like GTPase MGM1, small form</fullName>
            <shortName>s-MGM1</shortName>
        </recommendedName>
    </component>
</protein>
<dbReference type="EC" id="3.6.5.5" evidence="16 17 19"/>
<dbReference type="EMBL" id="X62834">
    <property type="protein sequence ID" value="CAA44637.1"/>
    <property type="status" value="ALT_FRAME"/>
    <property type="molecule type" value="Genomic_DNA"/>
</dbReference>
<dbReference type="EMBL" id="L07419">
    <property type="status" value="NOT_ANNOTATED_CDS"/>
    <property type="molecule type" value="Genomic_DNA"/>
</dbReference>
<dbReference type="EMBL" id="Z75119">
    <property type="protein sequence ID" value="CAA99426.1"/>
    <property type="status" value="ALT_INIT"/>
    <property type="molecule type" value="Genomic_DNA"/>
</dbReference>
<dbReference type="EMBL" id="Z75120">
    <property type="protein sequence ID" value="CAA99428.1"/>
    <property type="status" value="ALT_INIT"/>
    <property type="molecule type" value="Genomic_DNA"/>
</dbReference>
<dbReference type="EMBL" id="X92441">
    <property type="protein sequence ID" value="CAA63174.1"/>
    <property type="status" value="ALT_INIT"/>
    <property type="molecule type" value="Genomic_DNA"/>
</dbReference>
<dbReference type="EMBL" id="L11274">
    <property type="protein sequence ID" value="AAB59316.1"/>
    <property type="molecule type" value="Genomic_DNA"/>
</dbReference>
<dbReference type="EMBL" id="BK006948">
    <property type="protein sequence ID" value="DAA10983.1"/>
    <property type="molecule type" value="Genomic_DNA"/>
</dbReference>
<dbReference type="PIR" id="S33918">
    <property type="entry name" value="S33918"/>
</dbReference>
<dbReference type="RefSeq" id="NP_014854.2">
    <property type="nucleotide sequence ID" value="NM_001183630.1"/>
</dbReference>
<dbReference type="PDB" id="6JSJ">
    <property type="method" value="X-ray"/>
    <property type="resolution" value="3.20 A"/>
    <property type="chains" value="A/B/C=184-881"/>
</dbReference>
<dbReference type="PDBsum" id="6JSJ"/>
<dbReference type="EMDB" id="EMD-5644"/>
<dbReference type="SMR" id="P32266"/>
<dbReference type="BioGRID" id="34606">
    <property type="interactions" value="246"/>
</dbReference>
<dbReference type="ComplexPortal" id="CPX-161">
    <property type="entry name" value="FZO1-MGM1-UGO1 complex"/>
</dbReference>
<dbReference type="DIP" id="DIP-8008N"/>
<dbReference type="FunCoup" id="P32266">
    <property type="interactions" value="40"/>
</dbReference>
<dbReference type="IntAct" id="P32266">
    <property type="interactions" value="6"/>
</dbReference>
<dbReference type="MINT" id="P32266"/>
<dbReference type="STRING" id="4932.YOR211C"/>
<dbReference type="TCDB" id="1.N.6.1.1">
    <property type="family name" value="the mitochondrial inner/outer membrane fusion (mmf) family"/>
</dbReference>
<dbReference type="iPTMnet" id="P32266"/>
<dbReference type="PaxDb" id="4932-YOR211C"/>
<dbReference type="PeptideAtlas" id="P32266"/>
<dbReference type="EnsemblFungi" id="YOR211C_mRNA">
    <property type="protein sequence ID" value="YOR211C"/>
    <property type="gene ID" value="YOR211C"/>
</dbReference>
<dbReference type="GeneID" id="854386"/>
<dbReference type="KEGG" id="sce:YOR211C"/>
<dbReference type="AGR" id="SGD:S000005737"/>
<dbReference type="SGD" id="S000005737">
    <property type="gene designation" value="MGM1"/>
</dbReference>
<dbReference type="VEuPathDB" id="FungiDB:YOR211C"/>
<dbReference type="eggNOG" id="KOG0446">
    <property type="taxonomic scope" value="Eukaryota"/>
</dbReference>
<dbReference type="GeneTree" id="ENSGT00550000074851"/>
<dbReference type="HOGENOM" id="CLU_008640_0_1_1"/>
<dbReference type="InParanoid" id="P32266"/>
<dbReference type="OMA" id="PLKMGYV"/>
<dbReference type="OrthoDB" id="5061070at2759"/>
<dbReference type="BioCyc" id="YEAST:G3O-33713-MONOMER"/>
<dbReference type="Reactome" id="R-SCE-169911">
    <property type="pathway name" value="Regulation of Apoptosis"/>
</dbReference>
<dbReference type="BioGRID-ORCS" id="854386">
    <property type="hits" value="3 hits in 10 CRISPR screens"/>
</dbReference>
<dbReference type="PRO" id="PR:P32266"/>
<dbReference type="Proteomes" id="UP000002311">
    <property type="component" value="Chromosome XV"/>
</dbReference>
<dbReference type="RNAct" id="P32266">
    <property type="molecule type" value="protein"/>
</dbReference>
<dbReference type="GO" id="GO:0005737">
    <property type="term" value="C:cytoplasm"/>
    <property type="evidence" value="ECO:0000318"/>
    <property type="project" value="GO_Central"/>
</dbReference>
<dbReference type="GO" id="GO:0005874">
    <property type="term" value="C:microtubule"/>
    <property type="evidence" value="ECO:0000318"/>
    <property type="project" value="GO_Central"/>
</dbReference>
<dbReference type="GO" id="GO:0030061">
    <property type="term" value="C:mitochondrial crista"/>
    <property type="evidence" value="ECO:0000314"/>
    <property type="project" value="SGD"/>
</dbReference>
<dbReference type="GO" id="GO:0097002">
    <property type="term" value="C:mitochondrial inner boundary membrane"/>
    <property type="evidence" value="ECO:0000314"/>
    <property type="project" value="SGD"/>
</dbReference>
<dbReference type="GO" id="GO:0005743">
    <property type="term" value="C:mitochondrial inner membrane"/>
    <property type="evidence" value="ECO:0000314"/>
    <property type="project" value="SGD"/>
</dbReference>
<dbReference type="GO" id="GO:0005758">
    <property type="term" value="C:mitochondrial intermembrane space"/>
    <property type="evidence" value="ECO:0000314"/>
    <property type="project" value="UniProtKB"/>
</dbReference>
<dbReference type="GO" id="GO:0005741">
    <property type="term" value="C:mitochondrial outer membrane"/>
    <property type="evidence" value="ECO:0000314"/>
    <property type="project" value="SGD"/>
</dbReference>
<dbReference type="GO" id="GO:0005739">
    <property type="term" value="C:mitochondrion"/>
    <property type="evidence" value="ECO:0000314"/>
    <property type="project" value="ComplexPortal"/>
</dbReference>
<dbReference type="GO" id="GO:0005886">
    <property type="term" value="C:plasma membrane"/>
    <property type="evidence" value="ECO:0000318"/>
    <property type="project" value="GO_Central"/>
</dbReference>
<dbReference type="GO" id="GO:1901612">
    <property type="term" value="F:cardiolipin binding"/>
    <property type="evidence" value="ECO:0000314"/>
    <property type="project" value="UniProtKB"/>
</dbReference>
<dbReference type="GO" id="GO:0005525">
    <property type="term" value="F:GTP binding"/>
    <property type="evidence" value="ECO:0007669"/>
    <property type="project" value="UniProtKB-KW"/>
</dbReference>
<dbReference type="GO" id="GO:0003924">
    <property type="term" value="F:GTPase activity"/>
    <property type="evidence" value="ECO:0000314"/>
    <property type="project" value="UniProtKB"/>
</dbReference>
<dbReference type="GO" id="GO:0140523">
    <property type="term" value="F:GTPase-dependent fusogenic activity"/>
    <property type="evidence" value="ECO:0000314"/>
    <property type="project" value="UniProtKB"/>
</dbReference>
<dbReference type="GO" id="GO:0180020">
    <property type="term" value="F:membrane bending activity"/>
    <property type="evidence" value="ECO:0000314"/>
    <property type="project" value="UniProtKB"/>
</dbReference>
<dbReference type="GO" id="GO:0046872">
    <property type="term" value="F:metal ion binding"/>
    <property type="evidence" value="ECO:0007669"/>
    <property type="project" value="UniProtKB-KW"/>
</dbReference>
<dbReference type="GO" id="GO:0008017">
    <property type="term" value="F:microtubule binding"/>
    <property type="evidence" value="ECO:0000318"/>
    <property type="project" value="GO_Central"/>
</dbReference>
<dbReference type="GO" id="GO:0070300">
    <property type="term" value="F:phosphatidic acid binding"/>
    <property type="evidence" value="ECO:0000314"/>
    <property type="project" value="SGD"/>
</dbReference>
<dbReference type="GO" id="GO:0080025">
    <property type="term" value="F:phosphatidylinositol-3,5-bisphosphate binding"/>
    <property type="evidence" value="ECO:0000314"/>
    <property type="project" value="SGD"/>
</dbReference>
<dbReference type="GO" id="GO:0001786">
    <property type="term" value="F:phosphatidylserine binding"/>
    <property type="evidence" value="ECO:0000314"/>
    <property type="project" value="SGD"/>
</dbReference>
<dbReference type="GO" id="GO:0042407">
    <property type="term" value="P:cristae formation"/>
    <property type="evidence" value="ECO:0000314"/>
    <property type="project" value="UniProtKB"/>
</dbReference>
<dbReference type="GO" id="GO:0015886">
    <property type="term" value="P:heme transport"/>
    <property type="evidence" value="ECO:0000315"/>
    <property type="project" value="SGD"/>
</dbReference>
<dbReference type="GO" id="GO:0097753">
    <property type="term" value="P:membrane bending"/>
    <property type="evidence" value="ECO:0000314"/>
    <property type="project" value="UniProtKB"/>
</dbReference>
<dbReference type="GO" id="GO:0097749">
    <property type="term" value="P:membrane tubulation"/>
    <property type="evidence" value="ECO:0000314"/>
    <property type="project" value="UniProtKB"/>
</dbReference>
<dbReference type="GO" id="GO:0008053">
    <property type="term" value="P:mitochondrial fusion"/>
    <property type="evidence" value="ECO:0000314"/>
    <property type="project" value="UniProtKB"/>
</dbReference>
<dbReference type="GO" id="GO:0000002">
    <property type="term" value="P:mitochondrial genome maintenance"/>
    <property type="evidence" value="ECO:0000314"/>
    <property type="project" value="UniProtKB"/>
</dbReference>
<dbReference type="GO" id="GO:1990627">
    <property type="term" value="P:mitochondrial inner membrane fusion"/>
    <property type="evidence" value="ECO:0000314"/>
    <property type="project" value="UniProtKB"/>
</dbReference>
<dbReference type="GO" id="GO:0007006">
    <property type="term" value="P:mitochondrial membrane organization"/>
    <property type="evidence" value="ECO:0000314"/>
    <property type="project" value="UniProtKB"/>
</dbReference>
<dbReference type="GO" id="GO:1990626">
    <property type="term" value="P:mitochondrial outer membrane fusion"/>
    <property type="evidence" value="ECO:0000315"/>
    <property type="project" value="ComplexPortal"/>
</dbReference>
<dbReference type="GO" id="GO:0000001">
    <property type="term" value="P:mitochondrion inheritance"/>
    <property type="evidence" value="ECO:0000314"/>
    <property type="project" value="UniProtKB"/>
</dbReference>
<dbReference type="GO" id="GO:0007005">
    <property type="term" value="P:mitochondrion organization"/>
    <property type="evidence" value="ECO:0000315"/>
    <property type="project" value="SGD"/>
</dbReference>
<dbReference type="GO" id="GO:0031623">
    <property type="term" value="P:receptor internalization"/>
    <property type="evidence" value="ECO:0000318"/>
    <property type="project" value="GO_Central"/>
</dbReference>
<dbReference type="CDD" id="cd08771">
    <property type="entry name" value="DLP_1"/>
    <property type="match status" value="1"/>
</dbReference>
<dbReference type="FunFam" id="3.40.50.300:FF:000741">
    <property type="entry name" value="Putative mitochondrial dynamin GTPase"/>
    <property type="match status" value="1"/>
</dbReference>
<dbReference type="Gene3D" id="3.40.50.300">
    <property type="entry name" value="P-loop containing nucleotide triphosphate hydrolases"/>
    <property type="match status" value="1"/>
</dbReference>
<dbReference type="InterPro" id="IPR022812">
    <property type="entry name" value="Dynamin"/>
</dbReference>
<dbReference type="InterPro" id="IPR001401">
    <property type="entry name" value="Dynamin_GTPase"/>
</dbReference>
<dbReference type="InterPro" id="IPR019762">
    <property type="entry name" value="Dynamin_GTPase_CS"/>
</dbReference>
<dbReference type="InterPro" id="IPR045063">
    <property type="entry name" value="Dynamin_N"/>
</dbReference>
<dbReference type="InterPro" id="IPR030381">
    <property type="entry name" value="G_DYNAMIN_dom"/>
</dbReference>
<dbReference type="InterPro" id="IPR020850">
    <property type="entry name" value="GED_dom"/>
</dbReference>
<dbReference type="InterPro" id="IPR056495">
    <property type="entry name" value="LIS_MGM1"/>
</dbReference>
<dbReference type="InterPro" id="IPR027417">
    <property type="entry name" value="P-loop_NTPase"/>
</dbReference>
<dbReference type="PANTHER" id="PTHR11566">
    <property type="entry name" value="DYNAMIN"/>
    <property type="match status" value="1"/>
</dbReference>
<dbReference type="PANTHER" id="PTHR11566:SF212">
    <property type="entry name" value="DYNAMIN"/>
    <property type="match status" value="1"/>
</dbReference>
<dbReference type="Pfam" id="PF00350">
    <property type="entry name" value="Dynamin_N"/>
    <property type="match status" value="1"/>
</dbReference>
<dbReference type="Pfam" id="PF24550">
    <property type="entry name" value="LIS_MGM1"/>
    <property type="match status" value="1"/>
</dbReference>
<dbReference type="PRINTS" id="PR00195">
    <property type="entry name" value="DYNAMIN"/>
</dbReference>
<dbReference type="SMART" id="SM00053">
    <property type="entry name" value="DYNc"/>
    <property type="match status" value="1"/>
</dbReference>
<dbReference type="SUPFAM" id="SSF52540">
    <property type="entry name" value="P-loop containing nucleoside triphosphate hydrolases"/>
    <property type="match status" value="1"/>
</dbReference>
<dbReference type="PROSITE" id="PS00410">
    <property type="entry name" value="G_DYNAMIN_1"/>
    <property type="match status" value="1"/>
</dbReference>
<dbReference type="PROSITE" id="PS51718">
    <property type="entry name" value="G_DYNAMIN_2"/>
    <property type="match status" value="1"/>
</dbReference>
<dbReference type="PROSITE" id="PS51388">
    <property type="entry name" value="GED"/>
    <property type="match status" value="1"/>
</dbReference>
<reference key="1">
    <citation type="journal article" date="1992" name="Genes Dev.">
        <title>Mitochondrial DNA maintenance in yeast requires a protein containing a region related to the GTP-binding domain of dynamin.</title>
        <authorList>
            <person name="Jones B.A."/>
            <person name="Fangman W.L."/>
        </authorList>
    </citation>
    <scope>NUCLEOTIDE SEQUENCE [GENOMIC DNA]</scope>
    <source>
        <strain>BJ41-8C</strain>
    </source>
</reference>
<reference key="2">
    <citation type="journal article" date="1993" name="Curr. Genet.">
        <title>Normal mitochondrial structure and genome maintenance in yeast requires the dynamin-like product of the MGM1 gene.</title>
        <authorList>
            <person name="Guan K."/>
            <person name="Farh L."/>
            <person name="Marshall T."/>
            <person name="Deschenes R.J."/>
        </authorList>
    </citation>
    <scope>NUCLEOTIDE SEQUENCE [GENOMIC DNA]</scope>
    <scope>MUTAGENESIS OF MET-1; MET-39; MET-81 AND MET-92</scope>
</reference>
<reference key="3">
    <citation type="journal article" date="1997" name="Nature">
        <title>The nucleotide sequence of Saccharomyces cerevisiae chromosome XV.</title>
        <authorList>
            <person name="Dujon B."/>
            <person name="Albermann K."/>
            <person name="Aldea M."/>
            <person name="Alexandraki D."/>
            <person name="Ansorge W."/>
            <person name="Arino J."/>
            <person name="Benes V."/>
            <person name="Bohn C."/>
            <person name="Bolotin-Fukuhara M."/>
            <person name="Bordonne R."/>
            <person name="Boyer J."/>
            <person name="Camasses A."/>
            <person name="Casamayor A."/>
            <person name="Casas C."/>
            <person name="Cheret G."/>
            <person name="Cziepluch C."/>
            <person name="Daignan-Fornier B."/>
            <person name="Dang V.-D."/>
            <person name="de Haan M."/>
            <person name="Delius H."/>
            <person name="Durand P."/>
            <person name="Fairhead C."/>
            <person name="Feldmann H."/>
            <person name="Gaillon L."/>
            <person name="Galisson F."/>
            <person name="Gamo F.-J."/>
            <person name="Gancedo C."/>
            <person name="Goffeau A."/>
            <person name="Goulding S.E."/>
            <person name="Grivell L.A."/>
            <person name="Habbig B."/>
            <person name="Hand N.J."/>
            <person name="Hani J."/>
            <person name="Hattenhorst U."/>
            <person name="Hebling U."/>
            <person name="Hernando Y."/>
            <person name="Herrero E."/>
            <person name="Heumann K."/>
            <person name="Hiesel R."/>
            <person name="Hilger F."/>
            <person name="Hofmann B."/>
            <person name="Hollenberg C.P."/>
            <person name="Hughes B."/>
            <person name="Jauniaux J.-C."/>
            <person name="Kalogeropoulos A."/>
            <person name="Katsoulou C."/>
            <person name="Kordes E."/>
            <person name="Lafuente M.J."/>
            <person name="Landt O."/>
            <person name="Louis E.J."/>
            <person name="Maarse A.C."/>
            <person name="Madania A."/>
            <person name="Mannhaupt G."/>
            <person name="Marck C."/>
            <person name="Martin R.P."/>
            <person name="Mewes H.-W."/>
            <person name="Michaux G."/>
            <person name="Paces V."/>
            <person name="Parle-McDermott A.G."/>
            <person name="Pearson B.M."/>
            <person name="Perrin A."/>
            <person name="Pettersson B."/>
            <person name="Poch O."/>
            <person name="Pohl T.M."/>
            <person name="Poirey R."/>
            <person name="Portetelle D."/>
            <person name="Pujol A."/>
            <person name="Purnelle B."/>
            <person name="Ramezani Rad M."/>
            <person name="Rechmann S."/>
            <person name="Schwager C."/>
            <person name="Schweizer M."/>
            <person name="Sor F."/>
            <person name="Sterky F."/>
            <person name="Tarassov I.A."/>
            <person name="Teodoru C."/>
            <person name="Tettelin H."/>
            <person name="Thierry A."/>
            <person name="Tobiasch E."/>
            <person name="Tzermia M."/>
            <person name="Uhlen M."/>
            <person name="Unseld M."/>
            <person name="Valens M."/>
            <person name="Vandenbol M."/>
            <person name="Vetter I."/>
            <person name="Vlcek C."/>
            <person name="Voet M."/>
            <person name="Volckaert G."/>
            <person name="Voss H."/>
            <person name="Wambutt R."/>
            <person name="Wedler H."/>
            <person name="Wiemann S."/>
            <person name="Winsor B."/>
            <person name="Wolfe K.H."/>
            <person name="Zollner A."/>
            <person name="Zumstein E."/>
            <person name="Kleine K."/>
        </authorList>
    </citation>
    <scope>NUCLEOTIDE SEQUENCE [LARGE SCALE GENOMIC DNA]</scope>
    <source>
        <strain>ATCC 204508 / S288c</strain>
    </source>
</reference>
<reference key="4">
    <citation type="journal article" date="2014" name="G3 (Bethesda)">
        <title>The reference genome sequence of Saccharomyces cerevisiae: Then and now.</title>
        <authorList>
            <person name="Engel S.R."/>
            <person name="Dietrich F.S."/>
            <person name="Fisk D.G."/>
            <person name="Binkley G."/>
            <person name="Balakrishnan R."/>
            <person name="Costanzo M.C."/>
            <person name="Dwight S.S."/>
            <person name="Hitz B.C."/>
            <person name="Karra K."/>
            <person name="Nash R.S."/>
            <person name="Weng S."/>
            <person name="Wong E.D."/>
            <person name="Lloyd P."/>
            <person name="Skrzypek M.S."/>
            <person name="Miyasato S.R."/>
            <person name="Simison M."/>
            <person name="Cherry J.M."/>
        </authorList>
    </citation>
    <scope>GENOME REANNOTATION</scope>
    <source>
        <strain>ATCC 204508 / S288c</strain>
    </source>
</reference>
<reference key="5">
    <citation type="journal article" date="1996" name="Yeast">
        <title>Sequence and analysis of a 33 kb fragment from the right arm of chromosome XV of the yeast Saccharomyces cerevisiae.</title>
        <authorList>
            <person name="Galisson F."/>
            <person name="Dujon B."/>
        </authorList>
    </citation>
    <scope>NUCLEOTIDE SEQUENCE [GENOMIC DNA] OF 1-784</scope>
    <source>
        <strain>ATCC 96604 / S288c / FY1679</strain>
    </source>
</reference>
<reference key="6">
    <citation type="journal article" date="1993" name="Proc. Natl. Acad. Sci. U.S.A.">
        <title>Interactions between three common subunits of yeast RNA polymerases I and III.</title>
        <authorList>
            <person name="Lalo D."/>
            <person name="Carles C."/>
            <person name="Sentenac A."/>
            <person name="Thuriaux P."/>
        </authorList>
    </citation>
    <scope>NUCLEOTIDE SEQUENCE [GENOMIC DNA] OF 713-881</scope>
    <source>
        <strain>ATCC 28383 / FL100 / VTT C-80102</strain>
    </source>
</reference>
<reference key="7">
    <citation type="journal article" date="2003" name="J. Biol. Chem.">
        <title>Processing of Mgm1 by the rhomboid-type protease Pcp1 is required for maintenance of mitochondrial morphology and of mitochondrial DNA.</title>
        <authorList>
            <person name="Herlan M."/>
            <person name="Vogel F."/>
            <person name="Bornhoevd C."/>
            <person name="Neupert W."/>
            <person name="Reichert A.S."/>
        </authorList>
    </citation>
    <scope>PROTEIN SEQUENCE OF 60-67 AND 140-147</scope>
    <scope>FUNCTION</scope>
    <scope>SUBCELLULAR LOCATION</scope>
    <scope>TOPOLOGY</scope>
    <source>
        <strain>ATCC 200060 / W303</strain>
    </source>
</reference>
<reference key="8">
    <citation type="journal article" date="1999" name="J. Cell Biol.">
        <title>The yeast dynamin-like protein, Mgm1p, functions on the mitochondrial outer membrane to mediate mitochondrial inheritance.</title>
        <authorList>
            <person name="Shepard K.A."/>
            <person name="Yaffe M.P."/>
        </authorList>
    </citation>
    <scope>FUNCTION</scope>
    <scope>SUBUNIT</scope>
    <scope>MUTAGENESIS OF SER-224 AND GLU-294</scope>
    <scope>IDENTIFICATION OF THE TRANSLATION INITIATION CODON</scope>
</reference>
<reference key="9">
    <citation type="journal article" date="2003" name="J. Cell Biol.">
        <title>The intramitochondrial dynamin-related GTPase, Mgm1p, is a component of a protein complex that mediates mitochondrial fusion.</title>
        <authorList>
            <person name="Wong E.D."/>
            <person name="Wagner J.A."/>
            <person name="Scott S.V."/>
            <person name="Okreglak V."/>
            <person name="Holewinske T.J."/>
            <person name="Cassidy-Stone A."/>
            <person name="Nunnari J."/>
        </authorList>
    </citation>
    <scope>FUNCTION</scope>
    <scope>SUBUNIT</scope>
    <scope>SUBCELLULAR LOCATION</scope>
    <scope>DISRUPTION PHENOTYPE</scope>
    <scope>MUTAGENESIS OF LYS-223; SER-224; THR-244; ARG-824 AND LYS-854</scope>
</reference>
<reference key="10">
    <citation type="journal article" date="2003" name="Mol. Biol. Cell">
        <title>Mgm1p, a dynamin-related GTPase, is essential for fusion of the mitochondrial outer membrane.</title>
        <authorList>
            <person name="Sesaki H."/>
            <person name="Southard S.M."/>
            <person name="Yaffe M.P."/>
            <person name="Jensen R.E."/>
        </authorList>
    </citation>
    <scope>INTERACTION WITH FZO1 AND UGO1</scope>
</reference>
<reference key="11">
    <citation type="journal article" date="2004" name="Science">
        <title>Mitochondrial fusion intermediates revealed in vitro.</title>
        <authorList>
            <person name="Meeusen S."/>
            <person name="McCaffery J.M."/>
            <person name="Nunnari J."/>
        </authorList>
    </citation>
    <scope>FUNCTION</scope>
</reference>
<reference key="12">
    <citation type="journal article" date="2004" name="J. Biol. Chem.">
        <title>Ugo1p links the Fzo1p and Mgm1p GTPases for mitochondrial fusion.</title>
        <authorList>
            <person name="Sesaki H."/>
            <person name="Jensen R.E."/>
        </authorList>
    </citation>
    <scope>FUNCTION</scope>
    <scope>INTERACTION WITH UGO1</scope>
</reference>
<reference key="13">
    <citation type="journal article" date="2004" name="J. Cell Biol.">
        <title>Alternative topogenesis of Mgm1 and mitochondrial morphology depend on ATP and a functional import motor.</title>
        <authorList>
            <person name="Herlan M."/>
            <person name="Bornhoevd C."/>
            <person name="Hell K."/>
            <person name="Neupert W."/>
            <person name="Reichert A.S."/>
        </authorList>
    </citation>
    <scope>FUNCTION</scope>
    <scope>PROTEOLYTIC PROCESSING</scope>
    <scope>SUBCELLULAR LOCATION</scope>
    <scope>MUTAGENESIS OF GLY-79</scope>
</reference>
<reference key="14">
    <citation type="journal article" date="2006" name="Cell">
        <title>Mitochondrial inner-membrane fusion and crista maintenance requires the dynamin-related GTPase Mgm1.</title>
        <authorList>
            <person name="Meeusen S."/>
            <person name="DeVay R."/>
            <person name="Block J."/>
            <person name="Cassidy-Stone A."/>
            <person name="Wayson S."/>
            <person name="McCaffery J.M."/>
            <person name="Nunnari J."/>
        </authorList>
    </citation>
    <scope>FUNCTION</scope>
    <scope>SUBCELLULAR LOCATION</scope>
    <scope>MUTAGENESIS OF PRO-237; SER-308; GLY-409 AND ASP-823</scope>
</reference>
<reference key="15">
    <citation type="journal article" date="2006" name="Mol. Biol. Cell">
        <title>Proteomic analysis of the yeast mitochondrial outer membrane reveals accumulation of a subclass of preproteins.</title>
        <authorList>
            <person name="Zahedi R.P."/>
            <person name="Sickmann A."/>
            <person name="Boehm A.M."/>
            <person name="Winkler C."/>
            <person name="Zufall N."/>
            <person name="Schoenfisch B."/>
            <person name="Guiard B."/>
            <person name="Pfanner N."/>
            <person name="Meisinger C."/>
        </authorList>
    </citation>
    <scope>SUBUNIT</scope>
    <scope>IDENTIFICATION BY MASS SPECTROMETRY</scope>
</reference>
<reference key="16">
    <citation type="journal article" date="2009" name="Biochemistry">
        <title>The dynamin-related protein Mgm1p assembles into oligomers and hydrolyzes GTP to function in mitochondrial membrane fusion.</title>
        <authorList>
            <person name="Meglei G."/>
            <person name="McQuibban G.A."/>
        </authorList>
    </citation>
    <scope>FUNCTION</scope>
    <scope>CATALYTIC ACTIVITY</scope>
    <scope>BIOPHYSICOCHEMICAL PROPERTIES</scope>
    <scope>MUTAGENESIS OF SER-224; THR-244 AND LYS-854</scope>
</reference>
<reference key="17">
    <citation type="journal article" date="2009" name="J. Cell Biol.">
        <title>Coassembly of Mgm1 isoforms requires cardiolipin and mediates mitochondrial inner membrane fusion.</title>
        <authorList>
            <person name="DeVay R.M."/>
            <person name="Dominguez-Ramirez L."/>
            <person name="Lackner L.L."/>
            <person name="Hoppins S."/>
            <person name="Stahlberg H."/>
            <person name="Nunnari J."/>
        </authorList>
    </citation>
    <scope>FUNCTION</scope>
    <scope>CATALYTIC ACTIVITY</scope>
    <scope>SUBCELLULAR LOCATION</scope>
    <scope>MUTAGENESIS OF SER-224</scope>
</reference>
<reference key="18">
    <citation type="journal article" date="2012" name="Mol. Cell. Proteomics">
        <title>Intermembrane space proteome of yeast mitochondria.</title>
        <authorList>
            <person name="Voegtle F.N."/>
            <person name="Burkhart J.M."/>
            <person name="Rao S."/>
            <person name="Gerbeth C."/>
            <person name="Hinrichs J."/>
            <person name="Martinou J.C."/>
            <person name="Chacinska A."/>
            <person name="Sickmann A."/>
            <person name="Zahedi R.P."/>
            <person name="Meisinger C."/>
        </authorList>
    </citation>
    <scope>IDENTIFICATION BY MASS SPECTROMETRY</scope>
    <scope>SUBCELLULAR LOCATION [LARGE SCALE ANALYSIS]</scope>
</reference>
<reference key="19">
    <citation type="journal article" date="2019" name="Nature">
        <title>Structure and assembly of the mitochondrial membrane remodelling GTPase Mgm1.</title>
        <authorList>
            <person name="Faelber K."/>
            <person name="Dietrich L."/>
            <person name="Noel J.K."/>
            <person name="Wollweber F."/>
            <person name="Pfitzner A.K."/>
            <person name="Muehleip A."/>
            <person name="Sanchez R."/>
            <person name="Kudryashev M."/>
            <person name="Chiaruttini N."/>
            <person name="Lilie H."/>
            <person name="Schlegel J."/>
            <person name="Rosenbaum E."/>
            <person name="Hessenberger M."/>
            <person name="Matthaeus C."/>
            <person name="Kunz S."/>
            <person name="von der Malsburg A."/>
            <person name="Noe F."/>
            <person name="Roux A."/>
            <person name="van der Laan M."/>
            <person name="Kuehlbrandt W."/>
            <person name="Daumke O."/>
        </authorList>
    </citation>
    <scope>FUNCTION</scope>
    <scope>MUTAGENESIS OF TYR-520 AND PHE-805</scope>
</reference>
<reference evidence="27" key="20">
    <citation type="journal article" date="2020" name="Proc. Natl. Acad. Sci. U.S.A.">
        <title>Structural analysis of a trimeric assembly of the mitochondrial dynamin-like GTPase Mgm1.</title>
        <authorList>
            <person name="Yan L."/>
            <person name="Qi Y."/>
            <person name="Ricketson D."/>
            <person name="Li L."/>
            <person name="Subramanian K."/>
            <person name="Zhao J."/>
            <person name="Yu C."/>
            <person name="Wu L."/>
            <person name="Sarsam R."/>
            <person name="Wong M."/>
            <person name="Lou Z."/>
            <person name="Rao Z."/>
            <person name="Nunnari J."/>
            <person name="Hu J."/>
        </authorList>
    </citation>
    <scope>X-RAY CRYSTALLOGRAPHY (3.20 ANGSTROMS) OF 184-881 IN COMPLEX WITH GDP</scope>
    <scope>FUNCTION</scope>
    <scope>CATALYTIC ACTIVITY</scope>
    <scope>DISULFIDE BOND</scope>
    <scope>MUTAGENESIS OF 277-LYS--ARG-280; 486-LYS--LYS-494 AND ASP-542</scope>
</reference>
<feature type="transit peptide" description="Mitochondrion" evidence="9">
    <location>
        <begin position="1"/>
        <end position="59"/>
    </location>
</feature>
<feature type="chain" id="PRO_0000007400" description="Dynamin-like GTPase MGM1, long form" evidence="23">
    <location>
        <begin position="60"/>
        <end position="881"/>
    </location>
</feature>
<feature type="chain" id="PRO_0000007401" description="Dynamin-like GTPase MGM1, small form" evidence="23">
    <location>
        <begin position="140"/>
        <end position="881"/>
    </location>
</feature>
<feature type="topological domain" description="Mitochondrial matrix" evidence="3">
    <location>
        <begin position="60"/>
        <end position="72"/>
    </location>
</feature>
<feature type="transmembrane region" description="Helical; Signal-anchor for type II membrane protein" evidence="3">
    <location>
        <begin position="73"/>
        <end position="92"/>
    </location>
</feature>
<feature type="topological domain" description="Mitochondrial intermembrane" evidence="3">
    <location>
        <begin position="93"/>
        <end position="881"/>
    </location>
</feature>
<feature type="domain" description="Dynamin-type G" evidence="5">
    <location>
        <begin position="207"/>
        <end position="505"/>
    </location>
</feature>
<feature type="domain" description="GED" evidence="4">
    <location>
        <begin position="780"/>
        <end position="872"/>
    </location>
</feature>
<feature type="region of interest" description="Disordered" evidence="6">
    <location>
        <begin position="145"/>
        <end position="183"/>
    </location>
</feature>
<feature type="region of interest" description="G1 motif" evidence="5">
    <location>
        <begin position="217"/>
        <end position="224"/>
    </location>
</feature>
<feature type="region of interest" description="G2 motif" evidence="5">
    <location>
        <begin position="243"/>
        <end position="245"/>
    </location>
</feature>
<feature type="region of interest" description="G3 motif" evidence="5">
    <location>
        <begin position="317"/>
        <end position="320"/>
    </location>
</feature>
<feature type="region of interest" description="G4 motif" evidence="5">
    <location>
        <begin position="385"/>
        <end position="388"/>
    </location>
</feature>
<feature type="region of interest" description="G5 motif" evidence="5">
    <location>
        <begin position="414"/>
        <end position="417"/>
    </location>
</feature>
<feature type="region of interest" description="Paddle region" evidence="2">
    <location>
        <begin position="668"/>
        <end position="780"/>
    </location>
</feature>
<feature type="compositionally biased region" description="Acidic residues" evidence="6">
    <location>
        <begin position="160"/>
        <end position="176"/>
    </location>
</feature>
<feature type="binding site" evidence="25 27">
    <location>
        <position position="220"/>
    </location>
    <ligand>
        <name>GTP</name>
        <dbReference type="ChEBI" id="CHEBI:37565"/>
    </ligand>
</feature>
<feature type="binding site" evidence="25 27">
    <location>
        <position position="221"/>
    </location>
    <ligand>
        <name>GTP</name>
        <dbReference type="ChEBI" id="CHEBI:37565"/>
    </ligand>
</feature>
<feature type="binding site" evidence="25 27">
    <location>
        <position position="222"/>
    </location>
    <ligand>
        <name>GTP</name>
        <dbReference type="ChEBI" id="CHEBI:37565"/>
    </ligand>
</feature>
<feature type="binding site" evidence="25 27">
    <location>
        <position position="223"/>
    </location>
    <ligand>
        <name>GTP</name>
        <dbReference type="ChEBI" id="CHEBI:37565"/>
    </ligand>
</feature>
<feature type="binding site" evidence="25 27">
    <location>
        <position position="224"/>
    </location>
    <ligand>
        <name>GTP</name>
        <dbReference type="ChEBI" id="CHEBI:37565"/>
    </ligand>
</feature>
<feature type="binding site" evidence="2">
    <location>
        <position position="224"/>
    </location>
    <ligand>
        <name>Mg(2+)</name>
        <dbReference type="ChEBI" id="CHEBI:18420"/>
    </ligand>
</feature>
<feature type="binding site" evidence="25 27">
    <location>
        <position position="225"/>
    </location>
    <ligand>
        <name>GTP</name>
        <dbReference type="ChEBI" id="CHEBI:37565"/>
    </ligand>
</feature>
<feature type="binding site" evidence="2">
    <location>
        <position position="239"/>
    </location>
    <ligand>
        <name>GTP</name>
        <dbReference type="ChEBI" id="CHEBI:37565"/>
    </ligand>
</feature>
<feature type="binding site" evidence="2">
    <location>
        <position position="244"/>
    </location>
    <ligand>
        <name>Mg(2+)</name>
        <dbReference type="ChEBI" id="CHEBI:18420"/>
    </ligand>
</feature>
<feature type="binding site" evidence="2">
    <location>
        <position position="317"/>
    </location>
    <ligand>
        <name>Mg(2+)</name>
        <dbReference type="ChEBI" id="CHEBI:18420"/>
    </ligand>
</feature>
<feature type="binding site" evidence="25 27">
    <location>
        <position position="386"/>
    </location>
    <ligand>
        <name>GTP</name>
        <dbReference type="ChEBI" id="CHEBI:37565"/>
    </ligand>
</feature>
<feature type="binding site" evidence="25 27">
    <location>
        <position position="388"/>
    </location>
    <ligand>
        <name>GTP</name>
        <dbReference type="ChEBI" id="CHEBI:37565"/>
    </ligand>
</feature>
<feature type="binding site" evidence="25 27">
    <location>
        <position position="415"/>
    </location>
    <ligand>
        <name>GTP</name>
        <dbReference type="ChEBI" id="CHEBI:37565"/>
    </ligand>
</feature>
<feature type="disulfide bond" evidence="19 27">
    <location>
        <begin position="777"/>
        <end position="786"/>
    </location>
</feature>
<feature type="mutagenesis site" description="Abolishes translation." evidence="20">
    <original>M</original>
    <variation>A</variation>
    <location>
        <position position="1"/>
    </location>
</feature>
<feature type="mutagenesis site" description="No effect on translation." evidence="20">
    <original>M</original>
    <variation>A</variation>
    <location>
        <position position="39"/>
    </location>
</feature>
<feature type="mutagenesis site" description="Loss of function; most MGM1 processed to s-MGM1." evidence="12">
    <original>G</original>
    <variation>D</variation>
    <variation>K</variation>
    <location>
        <position position="79"/>
    </location>
</feature>
<feature type="mutagenesis site" description="No effect on translation." evidence="20">
    <original>M</original>
    <variation>A</variation>
    <location>
        <position position="81"/>
    </location>
</feature>
<feature type="mutagenesis site" description="No effect on translation." evidence="20">
    <original>M</original>
    <variation>A</variation>
    <location>
        <position position="92"/>
    </location>
</feature>
<feature type="mutagenesis site" description="Loss of stability." evidence="8">
    <original>K</original>
    <variation>A</variation>
    <location>
        <position position="223"/>
    </location>
</feature>
<feature type="mutagenesis site" description="Loss of GTPase activity." evidence="7 8 16 17">
    <original>S</original>
    <variation>A</variation>
    <location>
        <position position="224"/>
    </location>
</feature>
<feature type="mutagenesis site" description="Loss of GTPase activity." evidence="7 8">
    <original>S</original>
    <variation>N</variation>
    <location>
        <position position="224"/>
    </location>
</feature>
<feature type="mutagenesis site" description="In mgm1-8 mutant; temperature-sensitive mutant; impaired fusion of the mitochondrial inner membrane." evidence="15">
    <original>P</original>
    <variation>L</variation>
    <location>
        <position position="237"/>
    </location>
</feature>
<feature type="mutagenesis site" description="Loss of GTPase activity. Abolished GTPase activity." evidence="8 16">
    <original>T</original>
    <variation>A</variation>
    <location>
        <position position="244"/>
    </location>
</feature>
<feature type="mutagenesis site" description="Decreased association with liposomes without affecting the GTPase activity." evidence="19">
    <original>KEVK</original>
    <variation>REVR</variation>
    <location>
        <begin position="277"/>
        <end position="280"/>
    </location>
</feature>
<feature type="mutagenesis site" description="In mdm17; loss of function at 37 degrees Celsius." evidence="7">
    <original>E</original>
    <variation>K</variation>
    <location>
        <position position="294"/>
    </location>
</feature>
<feature type="mutagenesis site" description="In mgm1-6 mutant; temperature-sensitive mutant; impaired fusion of the mitochondrial inner membrane." evidence="15">
    <original>S</original>
    <variation>F</variation>
    <location>
        <position position="308"/>
    </location>
</feature>
<feature type="mutagenesis site" description="In mgm1-5 mutant; temperature-sensitive mutant; impaired fusion of the mitochondrial inner membrane." evidence="15">
    <original>G</original>
    <variation>D</variation>
    <location>
        <position position="409"/>
    </location>
</feature>
<feature type="mutagenesis site" description="Decreased association with liposomes without affecting the GTPase activity." evidence="19">
    <original>KKLREKLIK</original>
    <variation>RRLRERLIR</variation>
    <location>
        <begin position="486"/>
        <end position="494"/>
    </location>
</feature>
<feature type="mutagenesis site" description="Dominant negative mutant that induces fragmentation of the mitochondrial network." evidence="18">
    <original>Y</original>
    <variation>A</variation>
    <location>
        <position position="520"/>
    </location>
</feature>
<feature type="mutagenesis site" description="Impaired dimerization." evidence="19">
    <original>D</original>
    <variation>A</variation>
    <location>
        <position position="542"/>
    </location>
</feature>
<feature type="mutagenesis site" description="Impaired mitochondrial morphology." evidence="18">
    <original>F</original>
    <variation>D</variation>
    <location>
        <position position="805"/>
    </location>
</feature>
<feature type="mutagenesis site" description="In mgm1-7 mutant; temperature-sensitive mutant; impaired fusion of the mitochondrial inner membrane." evidence="15">
    <original>D</original>
    <variation>N</variation>
    <location>
        <position position="823"/>
    </location>
</feature>
<feature type="mutagenesis site" description="Loss of GED function." evidence="8">
    <original>R</original>
    <variation>A</variation>
    <location>
        <position position="824"/>
    </location>
</feature>
<feature type="mutagenesis site" description="Loss of GED function. Abolished GTPase activity." evidence="8 16">
    <original>K</original>
    <variation>A</variation>
    <location>
        <position position="854"/>
    </location>
</feature>
<feature type="sequence conflict" description="In Ref. 1; CAA44637." evidence="22" ref="1">
    <original>S</original>
    <variation>T</variation>
    <location>
        <position position="4"/>
    </location>
</feature>
<feature type="sequence conflict" description="In Ref. 1; CAA44637." evidence="22" ref="1">
    <original>G</original>
    <variation>C</variation>
    <location>
        <position position="129"/>
    </location>
</feature>
<feature type="sequence conflict" description="In Ref. 2; L07419." evidence="22" ref="2">
    <original>E</original>
    <variation>A</variation>
    <location>
        <position position="170"/>
    </location>
</feature>
<feature type="helix" evidence="28">
    <location>
        <begin position="188"/>
        <end position="199"/>
    </location>
</feature>
<feature type="strand" evidence="28">
    <location>
        <begin position="201"/>
        <end position="203"/>
    </location>
</feature>
<feature type="helix" evidence="28">
    <location>
        <begin position="207"/>
        <end position="209"/>
    </location>
</feature>
<feature type="strand" evidence="28">
    <location>
        <begin position="213"/>
        <end position="217"/>
    </location>
</feature>
<feature type="helix" evidence="28">
    <location>
        <begin position="223"/>
        <end position="231"/>
    </location>
</feature>
<feature type="strand" evidence="28">
    <location>
        <begin position="248"/>
        <end position="253"/>
    </location>
</feature>
<feature type="strand" evidence="28">
    <location>
        <begin position="262"/>
        <end position="265"/>
    </location>
</feature>
<feature type="helix" evidence="28">
    <location>
        <begin position="266"/>
        <end position="268"/>
    </location>
</feature>
<feature type="strand" evidence="28">
    <location>
        <begin position="270"/>
        <end position="273"/>
    </location>
</feature>
<feature type="helix" evidence="28">
    <location>
        <begin position="276"/>
        <end position="286"/>
    </location>
</feature>
<feature type="strand" evidence="28">
    <location>
        <begin position="301"/>
        <end position="306"/>
    </location>
</feature>
<feature type="strand" evidence="28">
    <location>
        <begin position="308"/>
        <end position="310"/>
    </location>
</feature>
<feature type="strand" evidence="28">
    <location>
        <begin position="312"/>
        <end position="317"/>
    </location>
</feature>
<feature type="helix" evidence="28">
    <location>
        <begin position="336"/>
        <end position="343"/>
    </location>
</feature>
<feature type="strand" evidence="28">
    <location>
        <begin position="350"/>
        <end position="355"/>
    </location>
</feature>
<feature type="strand" evidence="28">
    <location>
        <begin position="357"/>
        <end position="359"/>
    </location>
</feature>
<feature type="turn" evidence="28">
    <location>
        <begin position="361"/>
        <end position="363"/>
    </location>
</feature>
<feature type="helix" evidence="28">
    <location>
        <begin position="365"/>
        <end position="373"/>
    </location>
</feature>
<feature type="strand" evidence="28">
    <location>
        <begin position="375"/>
        <end position="384"/>
    </location>
</feature>
<feature type="helix" evidence="28">
    <location>
        <begin position="387"/>
        <end position="389"/>
    </location>
</feature>
<feature type="helix" evidence="28">
    <location>
        <begin position="392"/>
        <end position="399"/>
    </location>
</feature>
<feature type="strand" evidence="28">
    <location>
        <begin position="402"/>
        <end position="404"/>
    </location>
</feature>
<feature type="strand" evidence="28">
    <location>
        <begin position="410"/>
        <end position="412"/>
    </location>
</feature>
<feature type="helix" evidence="28">
    <location>
        <begin position="457"/>
        <end position="473"/>
    </location>
</feature>
<feature type="helix" evidence="28">
    <location>
        <begin position="475"/>
        <end position="477"/>
    </location>
</feature>
<feature type="strand" evidence="28">
    <location>
        <begin position="482"/>
        <end position="484"/>
    </location>
</feature>
<feature type="helix" evidence="28">
    <location>
        <begin position="485"/>
        <end position="502"/>
    </location>
</feature>
<feature type="helix" evidence="28">
    <location>
        <begin position="504"/>
        <end position="525"/>
    </location>
</feature>
<feature type="helix" evidence="28">
    <location>
        <begin position="533"/>
        <end position="553"/>
    </location>
</feature>
<feature type="turn" evidence="28">
    <location>
        <begin position="554"/>
        <end position="557"/>
    </location>
</feature>
<feature type="helix" evidence="28">
    <location>
        <begin position="558"/>
        <end position="578"/>
    </location>
</feature>
<feature type="turn" evidence="28">
    <location>
        <begin position="579"/>
        <end position="582"/>
    </location>
</feature>
<feature type="helix" evidence="28">
    <location>
        <begin position="586"/>
        <end position="590"/>
    </location>
</feature>
<feature type="helix" evidence="28">
    <location>
        <begin position="598"/>
        <end position="615"/>
    </location>
</feature>
<feature type="helix" evidence="28">
    <location>
        <begin position="619"/>
        <end position="640"/>
    </location>
</feature>
<feature type="helix" evidence="28">
    <location>
        <begin position="643"/>
        <end position="646"/>
    </location>
</feature>
<feature type="helix" evidence="28">
    <location>
        <begin position="648"/>
        <end position="663"/>
    </location>
</feature>
<feature type="helix" evidence="28">
    <location>
        <begin position="666"/>
        <end position="676"/>
    </location>
</feature>
<feature type="helix" evidence="28">
    <location>
        <begin position="677"/>
        <end position="680"/>
    </location>
</feature>
<feature type="helix" evidence="28">
    <location>
        <begin position="688"/>
        <end position="720"/>
    </location>
</feature>
<feature type="helix" evidence="28">
    <location>
        <begin position="722"/>
        <end position="733"/>
    </location>
</feature>
<feature type="helix" evidence="28">
    <location>
        <begin position="748"/>
        <end position="775"/>
    </location>
</feature>
<feature type="strand" evidence="28">
    <location>
        <begin position="780"/>
        <end position="783"/>
    </location>
</feature>
<feature type="helix" evidence="28">
    <location>
        <begin position="787"/>
        <end position="809"/>
    </location>
</feature>
<feature type="helix" evidence="28">
    <location>
        <begin position="811"/>
        <end position="827"/>
    </location>
</feature>
<feature type="helix" evidence="28">
    <location>
        <begin position="831"/>
        <end position="839"/>
    </location>
</feature>
<feature type="helix" evidence="28">
    <location>
        <begin position="842"/>
        <end position="871"/>
    </location>
</feature>
<organism>
    <name type="scientific">Saccharomyces cerevisiae (strain ATCC 204508 / S288c)</name>
    <name type="common">Baker's yeast</name>
    <dbReference type="NCBI Taxonomy" id="559292"/>
    <lineage>
        <taxon>Eukaryota</taxon>
        <taxon>Fungi</taxon>
        <taxon>Dikarya</taxon>
        <taxon>Ascomycota</taxon>
        <taxon>Saccharomycotina</taxon>
        <taxon>Saccharomycetes</taxon>
        <taxon>Saccharomycetales</taxon>
        <taxon>Saccharomycetaceae</taxon>
        <taxon>Saccharomyces</taxon>
    </lineage>
</organism>
<accession>P32266</accession>
<accession>D6W2R7</accession>
<accession>Q02609</accession>
<accession>Q08627</accession>
<gene>
    <name evidence="21 26" type="primary">MGM1</name>
    <name type="synonym">MDM17</name>
    <name type="ordered locus">YOR211C</name>
    <name type="ORF">YOR50-1</name>
</gene>
<comment type="function">
    <text evidence="2 7 8 9 11 12 13 15 16 17 18 19">Dynamin-related GTPase that is essential for normal mitochondrial morphology by mediating fusion of the mitochondrial inner membranes, regulating cristae morphology and maintaining respiratory chain function (PubMed:10037792, PubMed:12566426, PubMed:12707284, PubMed:15087460, PubMed:15297626, PubMed:17055438, PubMed:19236101, PubMed:19752025, PubMed:32041880). Exists in two forms: the transmembrane, long form (Dynamin-like GTPase MGM1, long form; L-MGM1), which is tethered to the inner mitochondrial membrane, and the short soluble form (Dynamin-like GTPase MGM1, short form; S-MGM1), which results from proteolytic cleavage and localizes in the intermembrane space (PubMed:12707284, PubMed:15096522, PubMed:19752025). Both forms (L-MGM1 and S-MGM1) cooperate to catalyze the fusion of the mitochondrial inner membrane (PubMed:12707284, PubMed:15096522, PubMed:17055438). The equilibrium between L-MGM1 and S-MGM1 is essential: excess levels of S-MGM1, following loss of mitochondrial membrane potential, lead to an impaired equilibrium between L-MGM1 and S-MGM1, inhibiting mitochondrial fusion (By similarity). Plays a role in the maintenance and remodeling of mitochondrial cristae, some invaginations of the mitochondrial inner membrane that provide an increase in the surface area (PubMed:31292547). Probably acts by forming helical filaments at the inside of inner membrane tubes with the shape and dimensions of crista junctions (PubMed:31292547).</text>
</comment>
<comment type="function">
    <molecule>Dynamin-like GTPase MGM1, long form</molecule>
    <text evidence="2 9 12 16 17 18 19">Constitutes the transmembrane long form (L-MGM1) that plays a central role in mitochondrial inner membrane fusion and cristae morphology (PubMed:12707284, PubMed:15096522, PubMed:19236101, PubMed:19752025, PubMed:32041880). L-MGM1 and the soluble short form (S-MGM1) form higher-order helical assemblies that coordinate the fusion of mitochondrial inner membranes (By similarity). Inner membrane-anchored L-MGM1 molecules initiate membrane remodeling by recruiting soluble S-MGM1 to rapidly polymerize into a flexible cylindrical scaffold encaging the mitochondrial inner membrane (By similarity). Once at the membrane surface, the formation of S-MGM1 helices induce bilayer curvature (By similarity). MGM1 dimerization through the paddle region, which inserts into cardiolipin-containing membrane, promotes GTP hydrolysis and the helical assembly of a flexible MGM1 lattice on the membrane, which drives membrane curvature and mitochondrial fusion (PubMed:19752025, PubMed:31292547, PubMed:32041880).</text>
</comment>
<comment type="function">
    <molecule>Dynamin-like GTPase MGM1, small form</molecule>
    <text evidence="2 9 12 16 17 18 19">Constitutes the soluble short form (S-MGM1) generated by cleavage by PCP1, which plays a central role in mitochondrial inner membrane fusion and cristae morphology (PubMed:12707284, PubMed:15096522, PubMed:19236101, PubMed:32041880). The transmembrane long form (L-MGM1) and the S-MGM1 form higher-order helical assemblies that coordinate the fusion of mitochondrial inner membranes (By similarity). Inner membrane-anchored L-MGM1 molecules initiate membrane remodeling by recruiting soluble S-MGM1 to rapidly polymerize into a flexible cylindrical scaffold encaging the mitochondrial inner membrane (By similarity). Once at the membrane surface, the formation of S-MGM1 helices induce bilayer curvature (By similarity). MGM1 dimerization through the paddle region, which inserts into cardiolipin-containing membrane, promotes GTP hydrolysis and the helical assembly of a flexible MGM1 lattice on the membrane, which drives membrane curvature and mitochondrial fusion (PubMed:19752025, PubMed:31292547, PubMed:32041880). Excess levels of S-MGM1 produced by cleavage by PCP1 following stress conditions that induce loss of mitochondrial membrane potential, lead to an impaired equilibrium between L-MGM1 and S-MGM1, thereby inhibiting mitochondrial fusion (By similarity).</text>
</comment>
<comment type="catalytic activity">
    <reaction evidence="16 17 19">
        <text>GTP + H2O = GDP + phosphate + H(+)</text>
        <dbReference type="Rhea" id="RHEA:19669"/>
        <dbReference type="ChEBI" id="CHEBI:15377"/>
        <dbReference type="ChEBI" id="CHEBI:15378"/>
        <dbReference type="ChEBI" id="CHEBI:37565"/>
        <dbReference type="ChEBI" id="CHEBI:43474"/>
        <dbReference type="ChEBI" id="CHEBI:58189"/>
        <dbReference type="EC" id="3.6.5.5"/>
    </reaction>
</comment>
<comment type="biophysicochemical properties">
    <kinetics>
        <KM evidence="16">308 uM for GTP</KM>
        <text evidence="16">kcat is 0.43 min(-1) with GTP substrate.</text>
    </kinetics>
</comment>
<comment type="subunit">
    <text evidence="7 8 10 14 16 17">Oligomeric complex consisting of membrane-bound and soluble forms of MGM1 (PubMed:10037792, PubMed:12566426, PubMed:16407407, PubMed:19236101, PubMed:19752025). Associates with FZO1 through interaction with the intermembrane space domain of UGO1 which binds FZO1 through its cytoplasmic domain (PubMed:12808034).</text>
</comment>
<comment type="interaction">
    <interactant intactId="EBI-10865">
        <id>P32266</id>
    </interactant>
    <interactant intactId="EBI-20900">
        <id>P38297</id>
        <label>FZO1</label>
    </interactant>
    <organismsDiffer>false</organismsDiffer>
    <experiments>2</experiments>
</comment>
<comment type="interaction">
    <interactant intactId="EBI-10865">
        <id>P32266</id>
    </interactant>
    <interactant intactId="EBI-32955">
        <id>Q03327</id>
        <label>UGO1</label>
    </interactant>
    <organismsDiffer>false</organismsDiffer>
    <experiments>2</experiments>
</comment>
<comment type="subcellular location">
    <molecule>Dynamin-like GTPase MGM1, long form</molecule>
    <subcellularLocation>
        <location evidence="12 17">Mitochondrion inner membrane</location>
        <topology evidence="3">Single-pass type II membrane protein</topology>
        <orientation evidence="24">Intermembrane side</orientation>
    </subcellularLocation>
</comment>
<comment type="subcellular location">
    <molecule>Dynamin-like GTPase MGM1, small form</molecule>
    <subcellularLocation>
        <location evidence="17">Mitochondrion intermembrane space</location>
    </subcellularLocation>
</comment>
<comment type="domain">
    <text evidence="1">The paddle region plays a major role in driving mitochondrial inner membrane fusion (By similarity). It binds lipid membranes enriched in negatively charged phospholipids, such as cardiolipin, and promotes membrane tubulation (By similarity). MGM1 dimerization through the paddle domain promotes the helical assembly of a flexible MGM1 lattice on the membrane, driving mitochondrial fusion in cells (By similarity).</text>
</comment>
<comment type="PTM">
    <text evidence="9 12">Cleavage of the transit peptide by mitochondrial processing protease (MPP) produces a long integral membrane form of MGM1 (l-MGM1). Further processing by the rhomboid protease PCP1 produces a short peripheral membrane form of MGM1 (s-MGM1). Both isoforms are required for full activity.</text>
</comment>
<comment type="disruption phenotype">
    <text evidence="8">Deletion of MGM1 causes the mitochondria to fragment and aggregate, and subsequently to lose their mitochondrial DNA and become respiration deficient.</text>
</comment>
<comment type="similarity">
    <text evidence="5">Belongs to the TRAFAC class dynamin-like GTPase superfamily. Dynamin/Fzo/YdjA family.</text>
</comment>
<comment type="sequence caution" evidence="22">
    <conflict type="frameshift">
        <sequence resource="EMBL-CDS" id="CAA44637"/>
    </conflict>
</comment>
<comment type="sequence caution" evidence="22">
    <conflict type="erroneous initiation">
        <sequence resource="EMBL-CDS" id="CAA63174"/>
    </conflict>
</comment>
<comment type="sequence caution" evidence="22">
    <conflict type="erroneous initiation">
        <sequence resource="EMBL-CDS" id="CAA99426"/>
    </conflict>
</comment>
<comment type="sequence caution" evidence="22">
    <conflict type="erroneous initiation">
        <sequence resource="EMBL-CDS" id="CAA99428"/>
    </conflict>
</comment>
<proteinExistence type="evidence at protein level"/>
<keyword id="KW-0002">3D-structure</keyword>
<keyword id="KW-0903">Direct protein sequencing</keyword>
<keyword id="KW-1015">Disulfide bond</keyword>
<keyword id="KW-0342">GTP-binding</keyword>
<keyword id="KW-0378">Hydrolase</keyword>
<keyword id="KW-0446">Lipid-binding</keyword>
<keyword id="KW-0460">Magnesium</keyword>
<keyword id="KW-0472">Membrane</keyword>
<keyword id="KW-0479">Metal-binding</keyword>
<keyword id="KW-0496">Mitochondrion</keyword>
<keyword id="KW-0999">Mitochondrion inner membrane</keyword>
<keyword id="KW-0547">Nucleotide-binding</keyword>
<keyword id="KW-1185">Reference proteome</keyword>
<keyword id="KW-0735">Signal-anchor</keyword>
<keyword id="KW-0809">Transit peptide</keyword>
<keyword id="KW-0812">Transmembrane</keyword>
<keyword id="KW-1133">Transmembrane helix</keyword>
<name>MGM1_YEAST</name>